<gene>
    <name evidence="1" type="primary">hutG</name>
    <name type="ordered locus">SAHV_2318</name>
</gene>
<keyword id="KW-0369">Histidine metabolism</keyword>
<keyword id="KW-0378">Hydrolase</keyword>
<keyword id="KW-0464">Manganese</keyword>
<keyword id="KW-0479">Metal-binding</keyword>
<reference key="1">
    <citation type="journal article" date="2008" name="Antimicrob. Agents Chemother.">
        <title>Mutated response regulator graR is responsible for phenotypic conversion of Staphylococcus aureus from heterogeneous vancomycin-intermediate resistance to vancomycin-intermediate resistance.</title>
        <authorList>
            <person name="Neoh H.-M."/>
            <person name="Cui L."/>
            <person name="Yuzawa H."/>
            <person name="Takeuchi F."/>
            <person name="Matsuo M."/>
            <person name="Hiramatsu K."/>
        </authorList>
    </citation>
    <scope>NUCLEOTIDE SEQUENCE [LARGE SCALE GENOMIC DNA]</scope>
    <source>
        <strain>Mu3 / ATCC 700698</strain>
    </source>
</reference>
<accession>A7X5U0</accession>
<sequence length="311" mass="34513">MYKQGEPNLWTGRLDSETDPKKFRHFQTVTFEDLSKLEKSSMPSGVGILGYAVDKGVALNKGRIGAKEGPDAIKQAFAGLPDLNQCETLVDYGNVYHDHEELIDTQKEFAMLAAKSIANHRQTFLLGGGHDIAYAQYLATRKVYPTQSIGVINIDAHFDTRAEQQSTSGTSFRQILEEDENTDYLVLGIAQGGNTQSLFDYAKEKKIDYVFADELLSHVSPTIKDMIERFVHEHDVIMFTICMDVIDSAFAPGVSAPAVLGLYPHTVLELAKRIIPSDKVSSVSIAEMNPTYDADNRTAKLVANLVHHFLK</sequence>
<name>HUTG_STAA1</name>
<organism>
    <name type="scientific">Staphylococcus aureus (strain Mu3 / ATCC 700698)</name>
    <dbReference type="NCBI Taxonomy" id="418127"/>
    <lineage>
        <taxon>Bacteria</taxon>
        <taxon>Bacillati</taxon>
        <taxon>Bacillota</taxon>
        <taxon>Bacilli</taxon>
        <taxon>Bacillales</taxon>
        <taxon>Staphylococcaceae</taxon>
        <taxon>Staphylococcus</taxon>
    </lineage>
</organism>
<dbReference type="EC" id="3.5.3.8" evidence="1"/>
<dbReference type="EMBL" id="AP009324">
    <property type="protein sequence ID" value="BAF79201.1"/>
    <property type="molecule type" value="Genomic_DNA"/>
</dbReference>
<dbReference type="RefSeq" id="WP_000277968.1">
    <property type="nucleotide sequence ID" value="NC_009782.1"/>
</dbReference>
<dbReference type="SMR" id="A7X5U0"/>
<dbReference type="KEGG" id="saw:SAHV_2318"/>
<dbReference type="HOGENOM" id="CLU_039478_2_0_9"/>
<dbReference type="UniPathway" id="UPA00379">
    <property type="reaction ID" value="UER00552"/>
</dbReference>
<dbReference type="GO" id="GO:0008783">
    <property type="term" value="F:agmatinase activity"/>
    <property type="evidence" value="ECO:0007669"/>
    <property type="project" value="TreeGrafter"/>
</dbReference>
<dbReference type="GO" id="GO:0050415">
    <property type="term" value="F:formimidoylglutamase activity"/>
    <property type="evidence" value="ECO:0007669"/>
    <property type="project" value="UniProtKB-UniRule"/>
</dbReference>
<dbReference type="GO" id="GO:0030145">
    <property type="term" value="F:manganese ion binding"/>
    <property type="evidence" value="ECO:0007669"/>
    <property type="project" value="UniProtKB-UniRule"/>
</dbReference>
<dbReference type="GO" id="GO:0019556">
    <property type="term" value="P:L-histidine catabolic process to glutamate and formamide"/>
    <property type="evidence" value="ECO:0007669"/>
    <property type="project" value="UniProtKB-UniPathway"/>
</dbReference>
<dbReference type="GO" id="GO:0019557">
    <property type="term" value="P:L-histidine catabolic process to glutamate and formate"/>
    <property type="evidence" value="ECO:0007669"/>
    <property type="project" value="UniProtKB-UniPathway"/>
</dbReference>
<dbReference type="GO" id="GO:0033389">
    <property type="term" value="P:putrescine biosynthetic process from arginine, via agmatine"/>
    <property type="evidence" value="ECO:0007669"/>
    <property type="project" value="TreeGrafter"/>
</dbReference>
<dbReference type="CDD" id="cd09988">
    <property type="entry name" value="Formimidoylglutamase"/>
    <property type="match status" value="1"/>
</dbReference>
<dbReference type="FunFam" id="3.40.800.10:FF:000015">
    <property type="entry name" value="Formimidoylglutamase"/>
    <property type="match status" value="1"/>
</dbReference>
<dbReference type="Gene3D" id="3.40.800.10">
    <property type="entry name" value="Ureohydrolase domain"/>
    <property type="match status" value="1"/>
</dbReference>
<dbReference type="HAMAP" id="MF_00737">
    <property type="entry name" value="Formimidoylglutam"/>
    <property type="match status" value="1"/>
</dbReference>
<dbReference type="InterPro" id="IPR005923">
    <property type="entry name" value="HutG"/>
</dbReference>
<dbReference type="InterPro" id="IPR006035">
    <property type="entry name" value="Ureohydrolase"/>
</dbReference>
<dbReference type="InterPro" id="IPR023696">
    <property type="entry name" value="Ureohydrolase_dom_sf"/>
</dbReference>
<dbReference type="NCBIfam" id="TIGR01227">
    <property type="entry name" value="hutG"/>
    <property type="match status" value="1"/>
</dbReference>
<dbReference type="PANTHER" id="PTHR11358">
    <property type="entry name" value="ARGINASE/AGMATINASE"/>
    <property type="match status" value="1"/>
</dbReference>
<dbReference type="PANTHER" id="PTHR11358:SF35">
    <property type="entry name" value="FORMIMIDOYLGLUTAMASE"/>
    <property type="match status" value="1"/>
</dbReference>
<dbReference type="Pfam" id="PF00491">
    <property type="entry name" value="Arginase"/>
    <property type="match status" value="1"/>
</dbReference>
<dbReference type="PIRSF" id="PIRSF036979">
    <property type="entry name" value="Arginase"/>
    <property type="match status" value="1"/>
</dbReference>
<dbReference type="SUPFAM" id="SSF52768">
    <property type="entry name" value="Arginase/deacetylase"/>
    <property type="match status" value="1"/>
</dbReference>
<dbReference type="PROSITE" id="PS51409">
    <property type="entry name" value="ARGINASE_2"/>
    <property type="match status" value="1"/>
</dbReference>
<protein>
    <recommendedName>
        <fullName evidence="1">Formimidoylglutamase</fullName>
        <ecNumber evidence="1">3.5.3.8</ecNumber>
    </recommendedName>
    <alternativeName>
        <fullName evidence="1">Formiminoglutamase</fullName>
    </alternativeName>
    <alternativeName>
        <fullName evidence="1">Formiminoglutamate hydrolase</fullName>
    </alternativeName>
</protein>
<proteinExistence type="inferred from homology"/>
<comment type="function">
    <text evidence="1">Catalyzes the conversion of N-formimidoyl-L-glutamate to L-glutamate and formamide.</text>
</comment>
<comment type="catalytic activity">
    <reaction evidence="1">
        <text>N-formimidoyl-L-glutamate + H2O = formamide + L-glutamate</text>
        <dbReference type="Rhea" id="RHEA:22492"/>
        <dbReference type="ChEBI" id="CHEBI:15377"/>
        <dbReference type="ChEBI" id="CHEBI:16397"/>
        <dbReference type="ChEBI" id="CHEBI:29985"/>
        <dbReference type="ChEBI" id="CHEBI:58928"/>
        <dbReference type="EC" id="3.5.3.8"/>
    </reaction>
</comment>
<comment type="cofactor">
    <cofactor evidence="1">
        <name>Mn(2+)</name>
        <dbReference type="ChEBI" id="CHEBI:29035"/>
    </cofactor>
    <text evidence="1">Binds 2 manganese ions per subunit.</text>
</comment>
<comment type="pathway">
    <text evidence="1">Amino-acid degradation; L-histidine degradation into L-glutamate; L-glutamate from N-formimidoyl-L-glutamate (hydrolase route): step 1/1.</text>
</comment>
<comment type="similarity">
    <text evidence="1">Belongs to the arginase family.</text>
</comment>
<feature type="chain" id="PRO_1000046303" description="Formimidoylglutamase">
    <location>
        <begin position="1"/>
        <end position="311"/>
    </location>
</feature>
<feature type="binding site" evidence="1">
    <location>
        <position position="130"/>
    </location>
    <ligand>
        <name>Mn(2+)</name>
        <dbReference type="ChEBI" id="CHEBI:29035"/>
        <label>1</label>
    </ligand>
</feature>
<feature type="binding site" evidence="1">
    <location>
        <position position="155"/>
    </location>
    <ligand>
        <name>Mn(2+)</name>
        <dbReference type="ChEBI" id="CHEBI:29035"/>
        <label>1</label>
    </ligand>
</feature>
<feature type="binding site" evidence="1">
    <location>
        <position position="155"/>
    </location>
    <ligand>
        <name>Mn(2+)</name>
        <dbReference type="ChEBI" id="CHEBI:29035"/>
        <label>2</label>
    </ligand>
</feature>
<feature type="binding site" evidence="1">
    <location>
        <position position="157"/>
    </location>
    <ligand>
        <name>Mn(2+)</name>
        <dbReference type="ChEBI" id="CHEBI:29035"/>
        <label>2</label>
    </ligand>
</feature>
<feature type="binding site" evidence="1">
    <location>
        <position position="159"/>
    </location>
    <ligand>
        <name>Mn(2+)</name>
        <dbReference type="ChEBI" id="CHEBI:29035"/>
        <label>1</label>
    </ligand>
</feature>
<feature type="binding site" evidence="1">
    <location>
        <position position="242"/>
    </location>
    <ligand>
        <name>Mn(2+)</name>
        <dbReference type="ChEBI" id="CHEBI:29035"/>
        <label>1</label>
    </ligand>
</feature>
<feature type="binding site" evidence="1">
    <location>
        <position position="242"/>
    </location>
    <ligand>
        <name>Mn(2+)</name>
        <dbReference type="ChEBI" id="CHEBI:29035"/>
        <label>2</label>
    </ligand>
</feature>
<feature type="binding site" evidence="1">
    <location>
        <position position="244"/>
    </location>
    <ligand>
        <name>Mn(2+)</name>
        <dbReference type="ChEBI" id="CHEBI:29035"/>
        <label>2</label>
    </ligand>
</feature>
<evidence type="ECO:0000255" key="1">
    <source>
        <dbReference type="HAMAP-Rule" id="MF_00737"/>
    </source>
</evidence>